<reference key="1">
    <citation type="submission" date="2008-10" db="EMBL/GenBank/DDBJ databases">
        <title>Genome sequence of Bacillus cereus B4264.</title>
        <authorList>
            <person name="Dodson R.J."/>
            <person name="Durkin A.S."/>
            <person name="Rosovitz M.J."/>
            <person name="Rasko D.A."/>
            <person name="Hoffmaster A."/>
            <person name="Ravel J."/>
            <person name="Sutton G."/>
        </authorList>
    </citation>
    <scope>NUCLEOTIDE SEQUENCE [LARGE SCALE GENOMIC DNA]</scope>
    <source>
        <strain>B4264</strain>
    </source>
</reference>
<proteinExistence type="inferred from homology"/>
<feature type="chain" id="PRO_1000142774" description="Large ribosomal subunit protein uL15">
    <location>
        <begin position="1"/>
        <end position="146"/>
    </location>
</feature>
<feature type="region of interest" description="Disordered" evidence="2">
    <location>
        <begin position="1"/>
        <end position="52"/>
    </location>
</feature>
<feature type="compositionally biased region" description="Basic and acidic residues" evidence="2">
    <location>
        <begin position="1"/>
        <end position="13"/>
    </location>
</feature>
<feature type="compositionally biased region" description="Gly residues" evidence="2">
    <location>
        <begin position="21"/>
        <end position="31"/>
    </location>
</feature>
<feature type="compositionally biased region" description="Gly residues" evidence="2">
    <location>
        <begin position="42"/>
        <end position="52"/>
    </location>
</feature>
<name>RL15_BACC4</name>
<comment type="function">
    <text evidence="1">Binds to the 23S rRNA.</text>
</comment>
<comment type="subunit">
    <text evidence="1">Part of the 50S ribosomal subunit.</text>
</comment>
<comment type="similarity">
    <text evidence="1">Belongs to the universal ribosomal protein uL15 family.</text>
</comment>
<gene>
    <name evidence="1" type="primary">rplO</name>
    <name type="ordered locus">BCB4264_A0150</name>
</gene>
<protein>
    <recommendedName>
        <fullName evidence="1">Large ribosomal subunit protein uL15</fullName>
    </recommendedName>
    <alternativeName>
        <fullName evidence="3">50S ribosomal protein L15</fullName>
    </alternativeName>
</protein>
<evidence type="ECO:0000255" key="1">
    <source>
        <dbReference type="HAMAP-Rule" id="MF_01341"/>
    </source>
</evidence>
<evidence type="ECO:0000256" key="2">
    <source>
        <dbReference type="SAM" id="MobiDB-lite"/>
    </source>
</evidence>
<evidence type="ECO:0000305" key="3"/>
<organism>
    <name type="scientific">Bacillus cereus (strain B4264)</name>
    <dbReference type="NCBI Taxonomy" id="405532"/>
    <lineage>
        <taxon>Bacteria</taxon>
        <taxon>Bacillati</taxon>
        <taxon>Bacillota</taxon>
        <taxon>Bacilli</taxon>
        <taxon>Bacillales</taxon>
        <taxon>Bacillaceae</taxon>
        <taxon>Bacillus</taxon>
        <taxon>Bacillus cereus group</taxon>
    </lineage>
</organism>
<accession>B7HJ67</accession>
<keyword id="KW-0687">Ribonucleoprotein</keyword>
<keyword id="KW-0689">Ribosomal protein</keyword>
<keyword id="KW-0694">RNA-binding</keyword>
<keyword id="KW-0699">rRNA-binding</keyword>
<sequence>MKLHELKPAEGSRKVRNRVGRGIGSGNGKTAGKGHKGQNARSGGGVRLGFEGGQTPLFRRLPKRGFTNINRKEFAIVNLSTLNRFEDGTEVTPELLLETGVISKLNDGVKVLASGAVEKKLTVKAHKFSSSAKEAIEAAGGSVEVI</sequence>
<dbReference type="EMBL" id="CP001176">
    <property type="protein sequence ID" value="ACK60067.1"/>
    <property type="molecule type" value="Genomic_DNA"/>
</dbReference>
<dbReference type="RefSeq" id="WP_000766081.1">
    <property type="nucleotide sequence ID" value="NZ_VEHB01000017.1"/>
</dbReference>
<dbReference type="SMR" id="B7HJ67"/>
<dbReference type="KEGG" id="bcb:BCB4264_A0150"/>
<dbReference type="HOGENOM" id="CLU_055188_4_2_9"/>
<dbReference type="Proteomes" id="UP000007096">
    <property type="component" value="Chromosome"/>
</dbReference>
<dbReference type="GO" id="GO:0022625">
    <property type="term" value="C:cytosolic large ribosomal subunit"/>
    <property type="evidence" value="ECO:0007669"/>
    <property type="project" value="TreeGrafter"/>
</dbReference>
<dbReference type="GO" id="GO:0019843">
    <property type="term" value="F:rRNA binding"/>
    <property type="evidence" value="ECO:0007669"/>
    <property type="project" value="UniProtKB-UniRule"/>
</dbReference>
<dbReference type="GO" id="GO:0003735">
    <property type="term" value="F:structural constituent of ribosome"/>
    <property type="evidence" value="ECO:0007669"/>
    <property type="project" value="InterPro"/>
</dbReference>
<dbReference type="GO" id="GO:0006412">
    <property type="term" value="P:translation"/>
    <property type="evidence" value="ECO:0007669"/>
    <property type="project" value="UniProtKB-UniRule"/>
</dbReference>
<dbReference type="FunFam" id="3.100.10.10:FF:000004">
    <property type="entry name" value="50S ribosomal protein L15"/>
    <property type="match status" value="1"/>
</dbReference>
<dbReference type="Gene3D" id="3.100.10.10">
    <property type="match status" value="1"/>
</dbReference>
<dbReference type="HAMAP" id="MF_01341">
    <property type="entry name" value="Ribosomal_uL15"/>
    <property type="match status" value="1"/>
</dbReference>
<dbReference type="InterPro" id="IPR030878">
    <property type="entry name" value="Ribosomal_uL15"/>
</dbReference>
<dbReference type="InterPro" id="IPR021131">
    <property type="entry name" value="Ribosomal_uL15/eL18"/>
</dbReference>
<dbReference type="InterPro" id="IPR036227">
    <property type="entry name" value="Ribosomal_uL15/eL18_sf"/>
</dbReference>
<dbReference type="InterPro" id="IPR005749">
    <property type="entry name" value="Ribosomal_uL15_bac-type"/>
</dbReference>
<dbReference type="InterPro" id="IPR001196">
    <property type="entry name" value="Ribosomal_uL15_CS"/>
</dbReference>
<dbReference type="NCBIfam" id="TIGR01071">
    <property type="entry name" value="rplO_bact"/>
    <property type="match status" value="1"/>
</dbReference>
<dbReference type="PANTHER" id="PTHR12934">
    <property type="entry name" value="50S RIBOSOMAL PROTEIN L15"/>
    <property type="match status" value="1"/>
</dbReference>
<dbReference type="PANTHER" id="PTHR12934:SF11">
    <property type="entry name" value="LARGE RIBOSOMAL SUBUNIT PROTEIN UL15M"/>
    <property type="match status" value="1"/>
</dbReference>
<dbReference type="Pfam" id="PF00828">
    <property type="entry name" value="Ribosomal_L27A"/>
    <property type="match status" value="1"/>
</dbReference>
<dbReference type="SUPFAM" id="SSF52080">
    <property type="entry name" value="Ribosomal proteins L15p and L18e"/>
    <property type="match status" value="1"/>
</dbReference>
<dbReference type="PROSITE" id="PS00475">
    <property type="entry name" value="RIBOSOMAL_L15"/>
    <property type="match status" value="1"/>
</dbReference>